<gene>
    <name evidence="6" type="primary">FOR1</name>
    <name type="ordered locus">Os07g0568700</name>
    <name type="ordered locus">LOC_Os07g38130</name>
    <name type="ORF">OJ1019_E02.4</name>
    <name evidence="8" type="ORF">OsJ_24796</name>
</gene>
<feature type="signal peptide" evidence="3">
    <location>
        <begin position="1"/>
        <end position="24"/>
    </location>
</feature>
<feature type="chain" id="PRO_0000023884" description="Polygalacturonase inhibitor 1">
    <location>
        <begin position="25"/>
        <end position="332"/>
    </location>
</feature>
<feature type="repeat" description="LRR 1" evidence="3">
    <location>
        <begin position="72"/>
        <end position="96"/>
    </location>
</feature>
<feature type="repeat" description="LRR 2" evidence="3">
    <location>
        <begin position="97"/>
        <end position="118"/>
    </location>
</feature>
<feature type="repeat" description="LRR 3" evidence="3">
    <location>
        <begin position="119"/>
        <end position="142"/>
    </location>
</feature>
<feature type="repeat" description="LRR 4" evidence="3">
    <location>
        <begin position="143"/>
        <end position="166"/>
    </location>
</feature>
<feature type="repeat" description="LRR 5" evidence="3">
    <location>
        <begin position="167"/>
        <end position="192"/>
    </location>
</feature>
<feature type="repeat" description="LRR 6" evidence="3">
    <location>
        <begin position="193"/>
        <end position="215"/>
    </location>
</feature>
<feature type="repeat" description="LRR 7" evidence="3">
    <location>
        <begin position="216"/>
        <end position="236"/>
    </location>
</feature>
<feature type="repeat" description="LRR 8" evidence="3">
    <location>
        <begin position="237"/>
        <end position="259"/>
    </location>
</feature>
<feature type="repeat" description="LRR 9" evidence="3">
    <location>
        <begin position="260"/>
        <end position="283"/>
    </location>
</feature>
<feature type="repeat" description="LRR 10" evidence="3">
    <location>
        <begin position="284"/>
        <end position="310"/>
    </location>
</feature>
<feature type="glycosylation site" description="N-linked (GlcNAc...) asparagine" evidence="4">
    <location>
        <position position="131"/>
    </location>
</feature>
<feature type="disulfide bond" evidence="2">
    <location>
        <begin position="27"/>
        <end position="58"/>
    </location>
</feature>
<feature type="disulfide bond" evidence="2">
    <location>
        <begin position="59"/>
        <end position="66"/>
    </location>
</feature>
<feature type="disulfide bond" evidence="2">
    <location>
        <begin position="298"/>
        <end position="320"/>
    </location>
</feature>
<feature type="disulfide bond" evidence="1">
    <location>
        <begin position="298"/>
        <end position="312"/>
    </location>
</feature>
<feature type="disulfide bond" evidence="1">
    <location>
        <begin position="320"/>
        <end position="329"/>
    </location>
</feature>
<name>PGIP1_ORYSJ</name>
<sequence>MASTASFMLAVLLAVAVAAAPARAVRCPPSDKQALMRVKQSLGNPATLSTWSLASADCCEWDHVRCDEAGRVNNVFIDGANDVRGQIPSAVAGLTALMSLSLFRLPGLSGPIPACLTALSNLQFLTISHTNVSGVIPDSLARIRSLDSVDLSHNSLTGPIPNSFSDLPNLRSLDLRSNKLTGCIPAGLVQGQFRSLILSYNQLTGPIPRDDAQDEINTVDLSHNRLTGDASFLFAAGRPIGKVDLSWNDLDFDLSKLVFPPELTYLDLSHNRIRGTVPRSLAALSTLQTLDLSYNRLCGPLPRLHGVIRHGCKPYEHNQCAGGAPLGGCHQS</sequence>
<accession>Q8GT95</accession>
<accession>Q0D5C7</accession>
<protein>
    <recommendedName>
        <fullName>Polygalacturonase inhibitor 1</fullName>
    </recommendedName>
    <alternativeName>
        <fullName evidence="6">Floral organ regulator 1</fullName>
    </alternativeName>
    <alternativeName>
        <fullName>Polygalacturonase-inhibiting protein 1</fullName>
        <shortName>PGIP-1</shortName>
    </alternativeName>
</protein>
<evidence type="ECO:0000250" key="1"/>
<evidence type="ECO:0000250" key="2">
    <source>
        <dbReference type="UniProtKB" id="P58822"/>
    </source>
</evidence>
<evidence type="ECO:0000255" key="3"/>
<evidence type="ECO:0000255" key="4">
    <source>
        <dbReference type="PROSITE-ProRule" id="PRU00498"/>
    </source>
</evidence>
<evidence type="ECO:0000269" key="5">
    <source>
    </source>
</evidence>
<evidence type="ECO:0000303" key="6">
    <source>
    </source>
</evidence>
<evidence type="ECO:0000305" key="7"/>
<evidence type="ECO:0000312" key="8">
    <source>
        <dbReference type="EMBL" id="EAZ40350.1"/>
    </source>
</evidence>
<comment type="function">
    <text evidence="5">Inhibitor of fungal polygalacturonase. Regulates floral organ number.</text>
</comment>
<comment type="subcellular location">
    <subcellularLocation>
        <location evidence="2">Secreted</location>
        <location evidence="2">Cell wall</location>
    </subcellularLocation>
</comment>
<comment type="tissue specificity">
    <text evidence="5">Highly expressed in calli, immature and mature panicles, and in three inner floral organs: lodicules, stamens and carpels. Expressed at low level in seedling roots and mature stems.</text>
</comment>
<comment type="developmental stage">
    <text evidence="5">Expression increases in the maturing panicle, but is low in developing seed.</text>
</comment>
<comment type="disruption phenotype">
    <text evidence="5">Increased numbers of floral organs, including the stamen, carpel, palea/lemma, stigma and lodicule.</text>
</comment>
<comment type="similarity">
    <text evidence="7">Belongs to the polygalacturonase-inhibiting protein family.</text>
</comment>
<keyword id="KW-0134">Cell wall</keyword>
<keyword id="KW-0221">Differentiation</keyword>
<keyword id="KW-1015">Disulfide bond</keyword>
<keyword id="KW-0325">Glycoprotein</keyword>
<keyword id="KW-0433">Leucine-rich repeat</keyword>
<keyword id="KW-1185">Reference proteome</keyword>
<keyword id="KW-0677">Repeat</keyword>
<keyword id="KW-0964">Secreted</keyword>
<keyword id="KW-0732">Signal</keyword>
<dbReference type="EMBL" id="AF466357">
    <property type="protein sequence ID" value="AAO17320.1"/>
    <property type="molecule type" value="mRNA"/>
</dbReference>
<dbReference type="EMBL" id="AP003981">
    <property type="protein sequence ID" value="BAC79683.1"/>
    <property type="molecule type" value="Genomic_DNA"/>
</dbReference>
<dbReference type="EMBL" id="AP008213">
    <property type="protein sequence ID" value="BAF21946.1"/>
    <property type="molecule type" value="Genomic_DNA"/>
</dbReference>
<dbReference type="EMBL" id="AP014963">
    <property type="protein sequence ID" value="BAT02212.1"/>
    <property type="molecule type" value="Genomic_DNA"/>
</dbReference>
<dbReference type="EMBL" id="CM000144">
    <property type="protein sequence ID" value="EAZ40350.1"/>
    <property type="molecule type" value="Genomic_DNA"/>
</dbReference>
<dbReference type="EMBL" id="AK061685">
    <property type="protein sequence ID" value="BAG88056.1"/>
    <property type="molecule type" value="mRNA"/>
</dbReference>
<dbReference type="EMBL" id="AK101897">
    <property type="protein sequence ID" value="BAG95278.1"/>
    <property type="molecule type" value="mRNA"/>
</dbReference>
<dbReference type="RefSeq" id="XP_015644653.1">
    <property type="nucleotide sequence ID" value="XM_015789167.1"/>
</dbReference>
<dbReference type="SMR" id="Q8GT95"/>
<dbReference type="FunCoup" id="Q8GT95">
    <property type="interactions" value="6"/>
</dbReference>
<dbReference type="STRING" id="39947.Q8GT95"/>
<dbReference type="GlyCosmos" id="Q8GT95">
    <property type="glycosylation" value="1 site, No reported glycans"/>
</dbReference>
<dbReference type="PaxDb" id="39947-Q8GT95"/>
<dbReference type="EnsemblPlants" id="Os07t0568700-02">
    <property type="protein sequence ID" value="Os07t0568700-02"/>
    <property type="gene ID" value="Os07g0568700"/>
</dbReference>
<dbReference type="Gramene" id="Os07t0568700-02">
    <property type="protein sequence ID" value="Os07t0568700-02"/>
    <property type="gene ID" value="Os07g0568700"/>
</dbReference>
<dbReference type="KEGG" id="dosa:Os07g0568700"/>
<dbReference type="eggNOG" id="ENOG502S4YE">
    <property type="taxonomic scope" value="Eukaryota"/>
</dbReference>
<dbReference type="HOGENOM" id="CLU_000288_18_22_1"/>
<dbReference type="InParanoid" id="Q8GT95"/>
<dbReference type="OMA" id="PRTDCCT"/>
<dbReference type="OrthoDB" id="596487at2759"/>
<dbReference type="Proteomes" id="UP000000763">
    <property type="component" value="Chromosome 7"/>
</dbReference>
<dbReference type="Proteomes" id="UP000007752">
    <property type="component" value="Chromosome 7"/>
</dbReference>
<dbReference type="Proteomes" id="UP000059680">
    <property type="component" value="Chromosome 7"/>
</dbReference>
<dbReference type="GO" id="GO:0005576">
    <property type="term" value="C:extracellular region"/>
    <property type="evidence" value="ECO:0007669"/>
    <property type="project" value="UniProtKB-KW"/>
</dbReference>
<dbReference type="GO" id="GO:0004857">
    <property type="term" value="F:enzyme inhibitor activity"/>
    <property type="evidence" value="ECO:0000314"/>
    <property type="project" value="Gramene"/>
</dbReference>
<dbReference type="GO" id="GO:0030154">
    <property type="term" value="P:cell differentiation"/>
    <property type="evidence" value="ECO:0007669"/>
    <property type="project" value="UniProtKB-KW"/>
</dbReference>
<dbReference type="GO" id="GO:0048833">
    <property type="term" value="P:specification of floral organ number"/>
    <property type="evidence" value="ECO:0000315"/>
    <property type="project" value="Gramene"/>
</dbReference>
<dbReference type="FunFam" id="3.80.10.10:FF:000348">
    <property type="entry name" value="Polygalacturonase inhibitor 1"/>
    <property type="match status" value="1"/>
</dbReference>
<dbReference type="Gene3D" id="3.80.10.10">
    <property type="entry name" value="Ribonuclease Inhibitor"/>
    <property type="match status" value="1"/>
</dbReference>
<dbReference type="InterPro" id="IPR001611">
    <property type="entry name" value="Leu-rich_rpt"/>
</dbReference>
<dbReference type="InterPro" id="IPR032675">
    <property type="entry name" value="LRR_dom_sf"/>
</dbReference>
<dbReference type="InterPro" id="IPR013210">
    <property type="entry name" value="LRR_N_plant-typ"/>
</dbReference>
<dbReference type="InterPro" id="IPR051848">
    <property type="entry name" value="PGIP"/>
</dbReference>
<dbReference type="PANTHER" id="PTHR48059">
    <property type="entry name" value="POLYGALACTURONASE INHIBITOR 1"/>
    <property type="match status" value="1"/>
</dbReference>
<dbReference type="PANTHER" id="PTHR48059:SF19">
    <property type="entry name" value="RECEPTOR-LIKE PROTEIN KINASE 5"/>
    <property type="match status" value="1"/>
</dbReference>
<dbReference type="Pfam" id="PF13855">
    <property type="entry name" value="LRR_8"/>
    <property type="match status" value="2"/>
</dbReference>
<dbReference type="Pfam" id="PF08263">
    <property type="entry name" value="LRRNT_2"/>
    <property type="match status" value="1"/>
</dbReference>
<dbReference type="PRINTS" id="PR00019">
    <property type="entry name" value="LEURICHRPT"/>
</dbReference>
<dbReference type="SUPFAM" id="SSF52058">
    <property type="entry name" value="L domain-like"/>
    <property type="match status" value="1"/>
</dbReference>
<reference key="1">
    <citation type="journal article" date="2003" name="Plant Mol. Biol.">
        <title>The OsFOR1 gene encodes a polygalacturonase-inhibiting protein (PGIP) that regulates floral organ number in rice.</title>
        <authorList>
            <person name="Jang S."/>
            <person name="Lee B."/>
            <person name="Kim C."/>
            <person name="Kim S.-J."/>
            <person name="Yim J."/>
            <person name="Han J.-J."/>
            <person name="Lee S."/>
            <person name="Kim S.-R."/>
            <person name="An G."/>
        </authorList>
    </citation>
    <scope>NUCLEOTIDE SEQUENCE [MRNA]</scope>
    <scope>FUNCTION</scope>
    <scope>DISRUPTION PHENOTYPE</scope>
    <scope>TISSUE SPECIFICITY</scope>
    <scope>DEVELOPMENTAL STAGE</scope>
    <source>
        <strain>cv. Dongjin</strain>
        <tissue>Panicle</tissue>
    </source>
</reference>
<reference key="2">
    <citation type="journal article" date="2005" name="Nature">
        <title>The map-based sequence of the rice genome.</title>
        <authorList>
            <consortium name="International rice genome sequencing project (IRGSP)"/>
        </authorList>
    </citation>
    <scope>NUCLEOTIDE SEQUENCE [LARGE SCALE GENOMIC DNA]</scope>
    <source>
        <strain>cv. Nipponbare</strain>
    </source>
</reference>
<reference key="3">
    <citation type="journal article" date="2008" name="Nucleic Acids Res.">
        <title>The rice annotation project database (RAP-DB): 2008 update.</title>
        <authorList>
            <consortium name="The rice annotation project (RAP)"/>
        </authorList>
    </citation>
    <scope>GENOME REANNOTATION</scope>
    <source>
        <strain>cv. Nipponbare</strain>
    </source>
</reference>
<reference key="4">
    <citation type="journal article" date="2013" name="Rice">
        <title>Improvement of the Oryza sativa Nipponbare reference genome using next generation sequence and optical map data.</title>
        <authorList>
            <person name="Kawahara Y."/>
            <person name="de la Bastide M."/>
            <person name="Hamilton J.P."/>
            <person name="Kanamori H."/>
            <person name="McCombie W.R."/>
            <person name="Ouyang S."/>
            <person name="Schwartz D.C."/>
            <person name="Tanaka T."/>
            <person name="Wu J."/>
            <person name="Zhou S."/>
            <person name="Childs K.L."/>
            <person name="Davidson R.M."/>
            <person name="Lin H."/>
            <person name="Quesada-Ocampo L."/>
            <person name="Vaillancourt B."/>
            <person name="Sakai H."/>
            <person name="Lee S.S."/>
            <person name="Kim J."/>
            <person name="Numa H."/>
            <person name="Itoh T."/>
            <person name="Buell C.R."/>
            <person name="Matsumoto T."/>
        </authorList>
    </citation>
    <scope>GENOME REANNOTATION</scope>
    <source>
        <strain>cv. Nipponbare</strain>
    </source>
</reference>
<reference key="5">
    <citation type="journal article" date="2005" name="PLoS Biol.">
        <title>The genomes of Oryza sativa: a history of duplications.</title>
        <authorList>
            <person name="Yu J."/>
            <person name="Wang J."/>
            <person name="Lin W."/>
            <person name="Li S."/>
            <person name="Li H."/>
            <person name="Zhou J."/>
            <person name="Ni P."/>
            <person name="Dong W."/>
            <person name="Hu S."/>
            <person name="Zeng C."/>
            <person name="Zhang J."/>
            <person name="Zhang Y."/>
            <person name="Li R."/>
            <person name="Xu Z."/>
            <person name="Li S."/>
            <person name="Li X."/>
            <person name="Zheng H."/>
            <person name="Cong L."/>
            <person name="Lin L."/>
            <person name="Yin J."/>
            <person name="Geng J."/>
            <person name="Li G."/>
            <person name="Shi J."/>
            <person name="Liu J."/>
            <person name="Lv H."/>
            <person name="Li J."/>
            <person name="Wang J."/>
            <person name="Deng Y."/>
            <person name="Ran L."/>
            <person name="Shi X."/>
            <person name="Wang X."/>
            <person name="Wu Q."/>
            <person name="Li C."/>
            <person name="Ren X."/>
            <person name="Wang J."/>
            <person name="Wang X."/>
            <person name="Li D."/>
            <person name="Liu D."/>
            <person name="Zhang X."/>
            <person name="Ji Z."/>
            <person name="Zhao W."/>
            <person name="Sun Y."/>
            <person name="Zhang Z."/>
            <person name="Bao J."/>
            <person name="Han Y."/>
            <person name="Dong L."/>
            <person name="Ji J."/>
            <person name="Chen P."/>
            <person name="Wu S."/>
            <person name="Liu J."/>
            <person name="Xiao Y."/>
            <person name="Bu D."/>
            <person name="Tan J."/>
            <person name="Yang L."/>
            <person name="Ye C."/>
            <person name="Zhang J."/>
            <person name="Xu J."/>
            <person name="Zhou Y."/>
            <person name="Yu Y."/>
            <person name="Zhang B."/>
            <person name="Zhuang S."/>
            <person name="Wei H."/>
            <person name="Liu B."/>
            <person name="Lei M."/>
            <person name="Yu H."/>
            <person name="Li Y."/>
            <person name="Xu H."/>
            <person name="Wei S."/>
            <person name="He X."/>
            <person name="Fang L."/>
            <person name="Zhang Z."/>
            <person name="Zhang Y."/>
            <person name="Huang X."/>
            <person name="Su Z."/>
            <person name="Tong W."/>
            <person name="Li J."/>
            <person name="Tong Z."/>
            <person name="Li S."/>
            <person name="Ye J."/>
            <person name="Wang L."/>
            <person name="Fang L."/>
            <person name="Lei T."/>
            <person name="Chen C.-S."/>
            <person name="Chen H.-C."/>
            <person name="Xu Z."/>
            <person name="Li H."/>
            <person name="Huang H."/>
            <person name="Zhang F."/>
            <person name="Xu H."/>
            <person name="Li N."/>
            <person name="Zhao C."/>
            <person name="Li S."/>
            <person name="Dong L."/>
            <person name="Huang Y."/>
            <person name="Li L."/>
            <person name="Xi Y."/>
            <person name="Qi Q."/>
            <person name="Li W."/>
            <person name="Zhang B."/>
            <person name="Hu W."/>
            <person name="Zhang Y."/>
            <person name="Tian X."/>
            <person name="Jiao Y."/>
            <person name="Liang X."/>
            <person name="Jin J."/>
            <person name="Gao L."/>
            <person name="Zheng W."/>
            <person name="Hao B."/>
            <person name="Liu S.-M."/>
            <person name="Wang W."/>
            <person name="Yuan L."/>
            <person name="Cao M."/>
            <person name="McDermott J."/>
            <person name="Samudrala R."/>
            <person name="Wang J."/>
            <person name="Wong G.K.-S."/>
            <person name="Yang H."/>
        </authorList>
    </citation>
    <scope>NUCLEOTIDE SEQUENCE [LARGE SCALE GENOMIC DNA]</scope>
    <source>
        <strain>cv. Nipponbare</strain>
    </source>
</reference>
<reference key="6">
    <citation type="journal article" date="2003" name="Science">
        <title>Collection, mapping, and annotation of over 28,000 cDNA clones from japonica rice.</title>
        <authorList>
            <consortium name="The rice full-length cDNA consortium"/>
        </authorList>
    </citation>
    <scope>NUCLEOTIDE SEQUENCE [LARGE SCALE MRNA]</scope>
    <source>
        <strain>cv. Nipponbare</strain>
    </source>
</reference>
<proteinExistence type="evidence at transcript level"/>
<organism>
    <name type="scientific">Oryza sativa subsp. japonica</name>
    <name type="common">Rice</name>
    <dbReference type="NCBI Taxonomy" id="39947"/>
    <lineage>
        <taxon>Eukaryota</taxon>
        <taxon>Viridiplantae</taxon>
        <taxon>Streptophyta</taxon>
        <taxon>Embryophyta</taxon>
        <taxon>Tracheophyta</taxon>
        <taxon>Spermatophyta</taxon>
        <taxon>Magnoliopsida</taxon>
        <taxon>Liliopsida</taxon>
        <taxon>Poales</taxon>
        <taxon>Poaceae</taxon>
        <taxon>BOP clade</taxon>
        <taxon>Oryzoideae</taxon>
        <taxon>Oryzeae</taxon>
        <taxon>Oryzinae</taxon>
        <taxon>Oryza</taxon>
        <taxon>Oryza sativa</taxon>
    </lineage>
</organism>